<evidence type="ECO:0000255" key="1">
    <source>
        <dbReference type="HAMAP-Rule" id="MF_01849"/>
    </source>
</evidence>
<evidence type="ECO:0000255" key="2">
    <source>
        <dbReference type="PROSITE-ProRule" id="PRU01266"/>
    </source>
</evidence>
<feature type="chain" id="PRO_0000350417" description="Dual-specificity RNA methyltransferase RlmN">
    <location>
        <begin position="1"/>
        <end position="413"/>
    </location>
</feature>
<feature type="domain" description="Radical SAM core" evidence="2">
    <location>
        <begin position="132"/>
        <end position="381"/>
    </location>
</feature>
<feature type="active site" description="Proton acceptor" evidence="1">
    <location>
        <position position="126"/>
    </location>
</feature>
<feature type="active site" description="S-methylcysteine intermediate" evidence="1">
    <location>
        <position position="384"/>
    </location>
</feature>
<feature type="binding site" evidence="1">
    <location>
        <position position="146"/>
    </location>
    <ligand>
        <name>[4Fe-4S] cluster</name>
        <dbReference type="ChEBI" id="CHEBI:49883"/>
        <note>4Fe-4S-S-AdoMet</note>
    </ligand>
</feature>
<feature type="binding site" evidence="1">
    <location>
        <position position="150"/>
    </location>
    <ligand>
        <name>[4Fe-4S] cluster</name>
        <dbReference type="ChEBI" id="CHEBI:49883"/>
        <note>4Fe-4S-S-AdoMet</note>
    </ligand>
</feature>
<feature type="binding site" evidence="1">
    <location>
        <position position="153"/>
    </location>
    <ligand>
        <name>[4Fe-4S] cluster</name>
        <dbReference type="ChEBI" id="CHEBI:49883"/>
        <note>4Fe-4S-S-AdoMet</note>
    </ligand>
</feature>
<feature type="binding site" evidence="1">
    <location>
        <begin position="210"/>
        <end position="211"/>
    </location>
    <ligand>
        <name>S-adenosyl-L-methionine</name>
        <dbReference type="ChEBI" id="CHEBI:59789"/>
    </ligand>
</feature>
<feature type="binding site" evidence="1">
    <location>
        <position position="242"/>
    </location>
    <ligand>
        <name>S-adenosyl-L-methionine</name>
        <dbReference type="ChEBI" id="CHEBI:59789"/>
    </ligand>
</feature>
<feature type="binding site" evidence="1">
    <location>
        <begin position="264"/>
        <end position="266"/>
    </location>
    <ligand>
        <name>S-adenosyl-L-methionine</name>
        <dbReference type="ChEBI" id="CHEBI:59789"/>
    </ligand>
</feature>
<feature type="binding site" evidence="1">
    <location>
        <position position="341"/>
    </location>
    <ligand>
        <name>S-adenosyl-L-methionine</name>
        <dbReference type="ChEBI" id="CHEBI:59789"/>
    </ligand>
</feature>
<feature type="disulfide bond" description="(transient)" evidence="1">
    <location>
        <begin position="139"/>
        <end position="384"/>
    </location>
</feature>
<proteinExistence type="inferred from homology"/>
<name>RLMN_SINMW</name>
<sequence>MSMAATETLNRTDIAKAPQVRLAAQPEKPSLIGLLREDMAKLLVEKGVPERQVKMRVSQVWHWLYVRGVSDFNEMSNVSKDMREMLSAHFTIARPEIVEEQVSGDGTRKWLLRFPPRGAGRPVEIETVYIPEEGRGTLCISSQVGCTLTCSFCHTGTQKLVRNLTAEEILAQLLLARDRLGDFPDRDTPQGAIVPAEGRKITNVVMMGMGEPLYNFENVKTALLIASDGDGLSLSKRRITLSTSGIVPEIYRTGEEIGVMLAISLHAVRDDLRDMLVPINKKYPLKELMEACRAYPGLSNARRITFEYVMLKDVNDSLEDAKELVKLLKGIPAKINLIPFNPWPGTNYQCSDWEQIEKFADFINQAGYASPIRTPRGRDILAACGQLKSDSERMRKVDRLAFEAMMIANHGED</sequence>
<protein>
    <recommendedName>
        <fullName evidence="1">Dual-specificity RNA methyltransferase RlmN</fullName>
        <ecNumber evidence="1">2.1.1.192</ecNumber>
    </recommendedName>
    <alternativeName>
        <fullName evidence="1">23S rRNA (adenine(2503)-C(2))-methyltransferase</fullName>
    </alternativeName>
    <alternativeName>
        <fullName evidence="1">23S rRNA m2A2503 methyltransferase</fullName>
    </alternativeName>
    <alternativeName>
        <fullName evidence="1">Ribosomal RNA large subunit methyltransferase N</fullName>
    </alternativeName>
    <alternativeName>
        <fullName evidence="1">tRNA (adenine(37)-C(2))-methyltransferase</fullName>
    </alternativeName>
    <alternativeName>
        <fullName evidence="1">tRNA m2A37 methyltransferase</fullName>
    </alternativeName>
</protein>
<reference key="1">
    <citation type="submission" date="2007-06" db="EMBL/GenBank/DDBJ databases">
        <title>Complete sequence of Sinorhizobium medicae WSM419 chromosome.</title>
        <authorList>
            <consortium name="US DOE Joint Genome Institute"/>
            <person name="Copeland A."/>
            <person name="Lucas S."/>
            <person name="Lapidus A."/>
            <person name="Barry K."/>
            <person name="Glavina del Rio T."/>
            <person name="Dalin E."/>
            <person name="Tice H."/>
            <person name="Pitluck S."/>
            <person name="Chain P."/>
            <person name="Malfatti S."/>
            <person name="Shin M."/>
            <person name="Vergez L."/>
            <person name="Schmutz J."/>
            <person name="Larimer F."/>
            <person name="Land M."/>
            <person name="Hauser L."/>
            <person name="Kyrpides N."/>
            <person name="Mikhailova N."/>
            <person name="Reeve W.G."/>
            <person name="Richardson P."/>
        </authorList>
    </citation>
    <scope>NUCLEOTIDE SEQUENCE [LARGE SCALE GENOMIC DNA]</scope>
    <source>
        <strain>WSM419</strain>
    </source>
</reference>
<dbReference type="EC" id="2.1.1.192" evidence="1"/>
<dbReference type="EMBL" id="CP000738">
    <property type="protein sequence ID" value="ABR61894.1"/>
    <property type="molecule type" value="Genomic_DNA"/>
</dbReference>
<dbReference type="RefSeq" id="YP_001328729.1">
    <property type="nucleotide sequence ID" value="NC_009636.1"/>
</dbReference>
<dbReference type="SMR" id="A6UE14"/>
<dbReference type="STRING" id="366394.Smed_3068"/>
<dbReference type="KEGG" id="smd:Smed_3068"/>
<dbReference type="PATRIC" id="fig|366394.8.peg.6298"/>
<dbReference type="eggNOG" id="COG0820">
    <property type="taxonomic scope" value="Bacteria"/>
</dbReference>
<dbReference type="HOGENOM" id="CLU_029101_0_0_5"/>
<dbReference type="OrthoDB" id="9793973at2"/>
<dbReference type="Proteomes" id="UP000001108">
    <property type="component" value="Chromosome"/>
</dbReference>
<dbReference type="GO" id="GO:0005737">
    <property type="term" value="C:cytoplasm"/>
    <property type="evidence" value="ECO:0007669"/>
    <property type="project" value="UniProtKB-SubCell"/>
</dbReference>
<dbReference type="GO" id="GO:0051539">
    <property type="term" value="F:4 iron, 4 sulfur cluster binding"/>
    <property type="evidence" value="ECO:0007669"/>
    <property type="project" value="UniProtKB-UniRule"/>
</dbReference>
<dbReference type="GO" id="GO:0046872">
    <property type="term" value="F:metal ion binding"/>
    <property type="evidence" value="ECO:0007669"/>
    <property type="project" value="UniProtKB-KW"/>
</dbReference>
<dbReference type="GO" id="GO:0070040">
    <property type="term" value="F:rRNA (adenine(2503)-C2-)-methyltransferase activity"/>
    <property type="evidence" value="ECO:0007669"/>
    <property type="project" value="UniProtKB-UniRule"/>
</dbReference>
<dbReference type="GO" id="GO:0019843">
    <property type="term" value="F:rRNA binding"/>
    <property type="evidence" value="ECO:0007669"/>
    <property type="project" value="UniProtKB-UniRule"/>
</dbReference>
<dbReference type="GO" id="GO:0002935">
    <property type="term" value="F:tRNA (adenine(37)-C2)-methyltransferase activity"/>
    <property type="evidence" value="ECO:0007669"/>
    <property type="project" value="UniProtKB-UniRule"/>
</dbReference>
<dbReference type="GO" id="GO:0000049">
    <property type="term" value="F:tRNA binding"/>
    <property type="evidence" value="ECO:0007669"/>
    <property type="project" value="UniProtKB-UniRule"/>
</dbReference>
<dbReference type="GO" id="GO:0070475">
    <property type="term" value="P:rRNA base methylation"/>
    <property type="evidence" value="ECO:0007669"/>
    <property type="project" value="UniProtKB-UniRule"/>
</dbReference>
<dbReference type="GO" id="GO:0030488">
    <property type="term" value="P:tRNA methylation"/>
    <property type="evidence" value="ECO:0007669"/>
    <property type="project" value="UniProtKB-UniRule"/>
</dbReference>
<dbReference type="CDD" id="cd01335">
    <property type="entry name" value="Radical_SAM"/>
    <property type="match status" value="1"/>
</dbReference>
<dbReference type="FunFam" id="3.20.20.70:FF:000008">
    <property type="entry name" value="Dual-specificity RNA methyltransferase RlmN"/>
    <property type="match status" value="1"/>
</dbReference>
<dbReference type="Gene3D" id="1.10.150.530">
    <property type="match status" value="1"/>
</dbReference>
<dbReference type="Gene3D" id="3.20.20.70">
    <property type="entry name" value="Aldolase class I"/>
    <property type="match status" value="1"/>
</dbReference>
<dbReference type="HAMAP" id="MF_01849">
    <property type="entry name" value="RNA_methyltr_RlmN"/>
    <property type="match status" value="1"/>
</dbReference>
<dbReference type="InterPro" id="IPR013785">
    <property type="entry name" value="Aldolase_TIM"/>
</dbReference>
<dbReference type="InterPro" id="IPR040072">
    <property type="entry name" value="Methyltransferase_A"/>
</dbReference>
<dbReference type="InterPro" id="IPR048641">
    <property type="entry name" value="RlmN_N"/>
</dbReference>
<dbReference type="InterPro" id="IPR027492">
    <property type="entry name" value="RNA_MTrfase_RlmN"/>
</dbReference>
<dbReference type="InterPro" id="IPR004383">
    <property type="entry name" value="rRNA_lsu_MTrfase_RlmN/Cfr"/>
</dbReference>
<dbReference type="InterPro" id="IPR007197">
    <property type="entry name" value="rSAM"/>
</dbReference>
<dbReference type="NCBIfam" id="TIGR00048">
    <property type="entry name" value="rRNA_mod_RlmN"/>
    <property type="match status" value="1"/>
</dbReference>
<dbReference type="PANTHER" id="PTHR30544">
    <property type="entry name" value="23S RRNA METHYLTRANSFERASE"/>
    <property type="match status" value="1"/>
</dbReference>
<dbReference type="PANTHER" id="PTHR30544:SF5">
    <property type="entry name" value="RADICAL SAM CORE DOMAIN-CONTAINING PROTEIN"/>
    <property type="match status" value="1"/>
</dbReference>
<dbReference type="Pfam" id="PF04055">
    <property type="entry name" value="Radical_SAM"/>
    <property type="match status" value="1"/>
</dbReference>
<dbReference type="Pfam" id="PF21016">
    <property type="entry name" value="RlmN_N"/>
    <property type="match status" value="1"/>
</dbReference>
<dbReference type="PIRSF" id="PIRSF006004">
    <property type="entry name" value="CHP00048"/>
    <property type="match status" value="1"/>
</dbReference>
<dbReference type="SFLD" id="SFLDF00275">
    <property type="entry name" value="adenosine_C2_methyltransferase"/>
    <property type="match status" value="1"/>
</dbReference>
<dbReference type="SFLD" id="SFLDG01062">
    <property type="entry name" value="methyltransferase_(Class_A)"/>
    <property type="match status" value="1"/>
</dbReference>
<dbReference type="SUPFAM" id="SSF102114">
    <property type="entry name" value="Radical SAM enzymes"/>
    <property type="match status" value="1"/>
</dbReference>
<dbReference type="PROSITE" id="PS51918">
    <property type="entry name" value="RADICAL_SAM"/>
    <property type="match status" value="1"/>
</dbReference>
<accession>A6UE14</accession>
<keyword id="KW-0004">4Fe-4S</keyword>
<keyword id="KW-0963">Cytoplasm</keyword>
<keyword id="KW-1015">Disulfide bond</keyword>
<keyword id="KW-0408">Iron</keyword>
<keyword id="KW-0411">Iron-sulfur</keyword>
<keyword id="KW-0479">Metal-binding</keyword>
<keyword id="KW-0489">Methyltransferase</keyword>
<keyword id="KW-0698">rRNA processing</keyword>
<keyword id="KW-0949">S-adenosyl-L-methionine</keyword>
<keyword id="KW-0808">Transferase</keyword>
<keyword id="KW-0819">tRNA processing</keyword>
<comment type="function">
    <text evidence="1">Specifically methylates position 2 of adenine 2503 in 23S rRNA and position 2 of adenine 37 in tRNAs. m2A2503 modification seems to play a crucial role in the proofreading step occurring at the peptidyl transferase center and thus would serve to optimize ribosomal fidelity.</text>
</comment>
<comment type="catalytic activity">
    <reaction evidence="1">
        <text>adenosine(2503) in 23S rRNA + 2 reduced [2Fe-2S]-[ferredoxin] + 2 S-adenosyl-L-methionine = 2-methyladenosine(2503) in 23S rRNA + 5'-deoxyadenosine + L-methionine + 2 oxidized [2Fe-2S]-[ferredoxin] + S-adenosyl-L-homocysteine</text>
        <dbReference type="Rhea" id="RHEA:42916"/>
        <dbReference type="Rhea" id="RHEA-COMP:10000"/>
        <dbReference type="Rhea" id="RHEA-COMP:10001"/>
        <dbReference type="Rhea" id="RHEA-COMP:10152"/>
        <dbReference type="Rhea" id="RHEA-COMP:10282"/>
        <dbReference type="ChEBI" id="CHEBI:17319"/>
        <dbReference type="ChEBI" id="CHEBI:33737"/>
        <dbReference type="ChEBI" id="CHEBI:33738"/>
        <dbReference type="ChEBI" id="CHEBI:57844"/>
        <dbReference type="ChEBI" id="CHEBI:57856"/>
        <dbReference type="ChEBI" id="CHEBI:59789"/>
        <dbReference type="ChEBI" id="CHEBI:74411"/>
        <dbReference type="ChEBI" id="CHEBI:74497"/>
        <dbReference type="EC" id="2.1.1.192"/>
    </reaction>
</comment>
<comment type="catalytic activity">
    <reaction evidence="1">
        <text>adenosine(37) in tRNA + 2 reduced [2Fe-2S]-[ferredoxin] + 2 S-adenosyl-L-methionine = 2-methyladenosine(37) in tRNA + 5'-deoxyadenosine + L-methionine + 2 oxidized [2Fe-2S]-[ferredoxin] + S-adenosyl-L-homocysteine</text>
        <dbReference type="Rhea" id="RHEA:43332"/>
        <dbReference type="Rhea" id="RHEA-COMP:10000"/>
        <dbReference type="Rhea" id="RHEA-COMP:10001"/>
        <dbReference type="Rhea" id="RHEA-COMP:10162"/>
        <dbReference type="Rhea" id="RHEA-COMP:10485"/>
        <dbReference type="ChEBI" id="CHEBI:17319"/>
        <dbReference type="ChEBI" id="CHEBI:33737"/>
        <dbReference type="ChEBI" id="CHEBI:33738"/>
        <dbReference type="ChEBI" id="CHEBI:57844"/>
        <dbReference type="ChEBI" id="CHEBI:57856"/>
        <dbReference type="ChEBI" id="CHEBI:59789"/>
        <dbReference type="ChEBI" id="CHEBI:74411"/>
        <dbReference type="ChEBI" id="CHEBI:74497"/>
        <dbReference type="EC" id="2.1.1.192"/>
    </reaction>
</comment>
<comment type="cofactor">
    <cofactor evidence="1">
        <name>[4Fe-4S] cluster</name>
        <dbReference type="ChEBI" id="CHEBI:49883"/>
    </cofactor>
    <text evidence="1">Binds 1 [4Fe-4S] cluster. The cluster is coordinated with 3 cysteines and an exchangeable S-adenosyl-L-methionine.</text>
</comment>
<comment type="subcellular location">
    <subcellularLocation>
        <location evidence="1">Cytoplasm</location>
    </subcellularLocation>
</comment>
<comment type="miscellaneous">
    <text evidence="1">Reaction proceeds by a ping-pong mechanism involving intermediate methylation of a conserved cysteine residue.</text>
</comment>
<comment type="similarity">
    <text evidence="1">Belongs to the radical SAM superfamily. RlmN family.</text>
</comment>
<organism>
    <name type="scientific">Sinorhizobium medicae (strain WSM419)</name>
    <name type="common">Ensifer medicae</name>
    <dbReference type="NCBI Taxonomy" id="366394"/>
    <lineage>
        <taxon>Bacteria</taxon>
        <taxon>Pseudomonadati</taxon>
        <taxon>Pseudomonadota</taxon>
        <taxon>Alphaproteobacteria</taxon>
        <taxon>Hyphomicrobiales</taxon>
        <taxon>Rhizobiaceae</taxon>
        <taxon>Sinorhizobium/Ensifer group</taxon>
        <taxon>Sinorhizobium</taxon>
    </lineage>
</organism>
<gene>
    <name evidence="1" type="primary">rlmN</name>
    <name type="ordered locus">Smed_3068</name>
</gene>